<reference key="1">
    <citation type="journal article" date="1988" name="J. Bacteriol.">
        <title>Nucleotide sequence and gene-polypeptide relationships of the glpABC operon encoding the anaerobic sn-glycerol-3-phosphate dehydrogenase of Escherichia coli K-12.</title>
        <authorList>
            <person name="Cole S.T."/>
            <person name="Eiglmeier K."/>
            <person name="Ahmed S."/>
            <person name="Honore N."/>
            <person name="Elmes L."/>
            <person name="Anderson W.F."/>
            <person name="Weiner J.H."/>
        </authorList>
    </citation>
    <scope>NUCLEOTIDE SEQUENCE [GENOMIC DNA]</scope>
    <scope>PARTIAL PROTEIN SEQUENCE</scope>
    <source>
        <strain>K12</strain>
    </source>
</reference>
<reference key="2">
    <citation type="journal article" date="1997" name="DNA Res.">
        <title>Construction of a contiguous 874-kb sequence of the Escherichia coli-K12 genome corresponding to 50.0-68.8 min on the linkage map and analysis of its sequence features.</title>
        <authorList>
            <person name="Yamamoto Y."/>
            <person name="Aiba H."/>
            <person name="Baba T."/>
            <person name="Hayashi K."/>
            <person name="Inada T."/>
            <person name="Isono K."/>
            <person name="Itoh T."/>
            <person name="Kimura S."/>
            <person name="Kitagawa M."/>
            <person name="Makino K."/>
            <person name="Miki T."/>
            <person name="Mitsuhashi N."/>
            <person name="Mizobuchi K."/>
            <person name="Mori H."/>
            <person name="Nakade S."/>
            <person name="Nakamura Y."/>
            <person name="Nashimoto H."/>
            <person name="Oshima T."/>
            <person name="Oyama S."/>
            <person name="Saito N."/>
            <person name="Sampei G."/>
            <person name="Satoh Y."/>
            <person name="Sivasundaram S."/>
            <person name="Tagami H."/>
            <person name="Takahashi H."/>
            <person name="Takeda J."/>
            <person name="Takemoto K."/>
            <person name="Uehara K."/>
            <person name="Wada C."/>
            <person name="Yamagata S."/>
            <person name="Horiuchi T."/>
        </authorList>
    </citation>
    <scope>NUCLEOTIDE SEQUENCE [LARGE SCALE GENOMIC DNA]</scope>
    <source>
        <strain>K12 / W3110 / ATCC 27325 / DSM 5911</strain>
    </source>
</reference>
<reference key="3">
    <citation type="journal article" date="1997" name="Science">
        <title>The complete genome sequence of Escherichia coli K-12.</title>
        <authorList>
            <person name="Blattner F.R."/>
            <person name="Plunkett G. III"/>
            <person name="Bloch C.A."/>
            <person name="Perna N.T."/>
            <person name="Burland V."/>
            <person name="Riley M."/>
            <person name="Collado-Vides J."/>
            <person name="Glasner J.D."/>
            <person name="Rode C.K."/>
            <person name="Mayhew G.F."/>
            <person name="Gregor J."/>
            <person name="Davis N.W."/>
            <person name="Kirkpatrick H.A."/>
            <person name="Goeden M.A."/>
            <person name="Rose D.J."/>
            <person name="Mau B."/>
            <person name="Shao Y."/>
        </authorList>
    </citation>
    <scope>NUCLEOTIDE SEQUENCE [LARGE SCALE GENOMIC DNA]</scope>
    <source>
        <strain>K12 / MG1655 / ATCC 47076</strain>
    </source>
</reference>
<reference key="4">
    <citation type="journal article" date="2006" name="Mol. Syst. Biol.">
        <title>Highly accurate genome sequences of Escherichia coli K-12 strains MG1655 and W3110.</title>
        <authorList>
            <person name="Hayashi K."/>
            <person name="Morooka N."/>
            <person name="Yamamoto Y."/>
            <person name="Fujita K."/>
            <person name="Isono K."/>
            <person name="Choi S."/>
            <person name="Ohtsubo E."/>
            <person name="Baba T."/>
            <person name="Wanner B.L."/>
            <person name="Mori H."/>
            <person name="Horiuchi T."/>
        </authorList>
    </citation>
    <scope>NUCLEOTIDE SEQUENCE [LARGE SCALE GENOMIC DNA]</scope>
    <source>
        <strain>K12 / W3110 / ATCC 27325 / DSM 5911</strain>
    </source>
</reference>
<keyword id="KW-0004">4Fe-4S</keyword>
<keyword id="KW-0997">Cell inner membrane</keyword>
<keyword id="KW-1003">Cell membrane</keyword>
<keyword id="KW-0903">Direct protein sequencing</keyword>
<keyword id="KW-0249">Electron transport</keyword>
<keyword id="KW-0408">Iron</keyword>
<keyword id="KW-0411">Iron-sulfur</keyword>
<keyword id="KW-0472">Membrane</keyword>
<keyword id="KW-0479">Metal-binding</keyword>
<keyword id="KW-1185">Reference proteome</keyword>
<keyword id="KW-0677">Repeat</keyword>
<keyword id="KW-0813">Transport</keyword>
<name>GLPC_ECOLI</name>
<accession>P0A996</accession>
<accession>P13034</accession>
<accession>P76927</accession>
<accession>P77679</accession>
<dbReference type="EMBL" id="M20938">
    <property type="protein sequence ID" value="AAA83866.1"/>
    <property type="molecule type" value="Genomic_DNA"/>
</dbReference>
<dbReference type="EMBL" id="U00096">
    <property type="protein sequence ID" value="AAC75303.1"/>
    <property type="molecule type" value="Genomic_DNA"/>
</dbReference>
<dbReference type="EMBL" id="AP009048">
    <property type="protein sequence ID" value="BAA16062.1"/>
    <property type="molecule type" value="Genomic_DNA"/>
</dbReference>
<dbReference type="PIR" id="A64995">
    <property type="entry name" value="DEECNC"/>
</dbReference>
<dbReference type="RefSeq" id="NP_416746.1">
    <property type="nucleotide sequence ID" value="NC_000913.3"/>
</dbReference>
<dbReference type="RefSeq" id="WP_001000379.1">
    <property type="nucleotide sequence ID" value="NZ_LN832404.1"/>
</dbReference>
<dbReference type="BioGRID" id="4262942">
    <property type="interactions" value="119"/>
</dbReference>
<dbReference type="BioGRID" id="851076">
    <property type="interactions" value="1"/>
</dbReference>
<dbReference type="ComplexPortal" id="CPX-4841">
    <property type="entry name" value="Anaerobic glycerol-3-phosphate dehydrogenase complex"/>
</dbReference>
<dbReference type="DIP" id="DIP-35835N"/>
<dbReference type="FunCoup" id="P0A996">
    <property type="interactions" value="129"/>
</dbReference>
<dbReference type="IntAct" id="P0A996">
    <property type="interactions" value="20"/>
</dbReference>
<dbReference type="STRING" id="511145.b2243"/>
<dbReference type="jPOST" id="P0A996"/>
<dbReference type="PaxDb" id="511145-b2243"/>
<dbReference type="EnsemblBacteria" id="AAC75303">
    <property type="protein sequence ID" value="AAC75303"/>
    <property type="gene ID" value="b2243"/>
</dbReference>
<dbReference type="GeneID" id="75172373"/>
<dbReference type="GeneID" id="946735"/>
<dbReference type="KEGG" id="ecj:JW2237"/>
<dbReference type="KEGG" id="eco:b2243"/>
<dbReference type="KEGG" id="ecoc:C3026_12530"/>
<dbReference type="PATRIC" id="fig|511145.12.peg.2332"/>
<dbReference type="EchoBASE" id="EB0388"/>
<dbReference type="eggNOG" id="COG0247">
    <property type="taxonomic scope" value="Bacteria"/>
</dbReference>
<dbReference type="HOGENOM" id="CLU_023081_7_1_6"/>
<dbReference type="InParanoid" id="P0A996"/>
<dbReference type="OMA" id="AYYHGCY"/>
<dbReference type="OrthoDB" id="9765258at2"/>
<dbReference type="PhylomeDB" id="P0A996"/>
<dbReference type="BioCyc" id="EcoCyc:ANGLYC3PDEHYDROGSUBUNITC-MONOMER"/>
<dbReference type="BioCyc" id="MetaCyc:ANGLYC3PDEHYDROGSUBUNITC-MONOMER"/>
<dbReference type="UniPathway" id="UPA00618">
    <property type="reaction ID" value="UER00673"/>
</dbReference>
<dbReference type="PRO" id="PR:P0A996"/>
<dbReference type="Proteomes" id="UP000000625">
    <property type="component" value="Chromosome"/>
</dbReference>
<dbReference type="GO" id="GO:0009331">
    <property type="term" value="C:glycerol-3-phosphate dehydrogenase (FAD) complex"/>
    <property type="evidence" value="ECO:0000303"/>
    <property type="project" value="ComplexPortal"/>
</dbReference>
<dbReference type="GO" id="GO:0005886">
    <property type="term" value="C:plasma membrane"/>
    <property type="evidence" value="ECO:0000314"/>
    <property type="project" value="EcoCyc"/>
</dbReference>
<dbReference type="GO" id="GO:0051539">
    <property type="term" value="F:4 iron, 4 sulfur cluster binding"/>
    <property type="evidence" value="ECO:0007669"/>
    <property type="project" value="UniProtKB-KW"/>
</dbReference>
<dbReference type="GO" id="GO:0004368">
    <property type="term" value="F:glycerol-3-phosphate dehydrogenase (quinone) activity"/>
    <property type="evidence" value="ECO:0000269"/>
    <property type="project" value="EcoCyc"/>
</dbReference>
<dbReference type="GO" id="GO:0051536">
    <property type="term" value="F:iron-sulfur cluster binding"/>
    <property type="evidence" value="ECO:0000314"/>
    <property type="project" value="EcoCyc"/>
</dbReference>
<dbReference type="GO" id="GO:0046872">
    <property type="term" value="F:metal ion binding"/>
    <property type="evidence" value="ECO:0000314"/>
    <property type="project" value="EcoCyc"/>
</dbReference>
<dbReference type="GO" id="GO:0009061">
    <property type="term" value="P:anaerobic respiration"/>
    <property type="evidence" value="ECO:0000270"/>
    <property type="project" value="EcoCyc"/>
</dbReference>
<dbReference type="GO" id="GO:0022900">
    <property type="term" value="P:electron transport chain"/>
    <property type="evidence" value="ECO:0000314"/>
    <property type="project" value="EcoCyc"/>
</dbReference>
<dbReference type="GO" id="GO:0019563">
    <property type="term" value="P:glycerol catabolic process"/>
    <property type="evidence" value="ECO:0007669"/>
    <property type="project" value="UniProtKB-UniPathway"/>
</dbReference>
<dbReference type="GO" id="GO:0046168">
    <property type="term" value="P:glycerol-3-phosphate catabolic process"/>
    <property type="evidence" value="ECO:0000303"/>
    <property type="project" value="ComplexPortal"/>
</dbReference>
<dbReference type="FunFam" id="1.10.1060.10:FF:000008">
    <property type="entry name" value="Glycerol-3-phosphate dehydrogenase, anaerobic, C subunit"/>
    <property type="match status" value="1"/>
</dbReference>
<dbReference type="Gene3D" id="1.10.1060.10">
    <property type="entry name" value="Alpha-helical ferredoxin"/>
    <property type="match status" value="1"/>
</dbReference>
<dbReference type="InterPro" id="IPR017896">
    <property type="entry name" value="4Fe4S_Fe-S-bd"/>
</dbReference>
<dbReference type="InterPro" id="IPR017900">
    <property type="entry name" value="4Fe4S_Fe_S_CS"/>
</dbReference>
<dbReference type="InterPro" id="IPR004017">
    <property type="entry name" value="Cys_rich_dom"/>
</dbReference>
<dbReference type="InterPro" id="IPR017753">
    <property type="entry name" value="G3P_DH_GlpC_su"/>
</dbReference>
<dbReference type="InterPro" id="IPR009051">
    <property type="entry name" value="Helical_ferredxn"/>
</dbReference>
<dbReference type="NCBIfam" id="TIGR03379">
    <property type="entry name" value="glycerol3P_GlpC"/>
    <property type="match status" value="1"/>
</dbReference>
<dbReference type="NCBIfam" id="NF008369">
    <property type="entry name" value="PRK11168.1"/>
    <property type="match status" value="1"/>
</dbReference>
<dbReference type="PANTHER" id="PTHR32479:SF19">
    <property type="entry name" value="ANAEROBIC GLYCEROL-3-PHOSPHATE DEHYDROGENASE SUBUNIT C"/>
    <property type="match status" value="1"/>
</dbReference>
<dbReference type="PANTHER" id="PTHR32479">
    <property type="entry name" value="GLYCOLATE OXIDASE IRON-SULFUR SUBUNIT"/>
    <property type="match status" value="1"/>
</dbReference>
<dbReference type="Pfam" id="PF02754">
    <property type="entry name" value="CCG"/>
    <property type="match status" value="2"/>
</dbReference>
<dbReference type="Pfam" id="PF13183">
    <property type="entry name" value="Fer4_8"/>
    <property type="match status" value="1"/>
</dbReference>
<dbReference type="SUPFAM" id="SSF46548">
    <property type="entry name" value="alpha-helical ferredoxin"/>
    <property type="match status" value="1"/>
</dbReference>
<dbReference type="PROSITE" id="PS00198">
    <property type="entry name" value="4FE4S_FER_1"/>
    <property type="match status" value="2"/>
</dbReference>
<dbReference type="PROSITE" id="PS51379">
    <property type="entry name" value="4FE4S_FER_2"/>
    <property type="match status" value="2"/>
</dbReference>
<sequence length="396" mass="44108">MNDTSFENCIKCTVCTTACPVSRVNPGYPGPKQAGPDGERLRLKDGALYDEALKYCINCKRCEVACPSDVKIGDIIQRARAKYDTTRPSLRNFVLSHTDLMGSVSTPFAPIVNTATSLKPVRQLLDAALKIDHRRTLPKYSFGTFRRWYRSVAAQQAQYKDQVAFFHGCFVNYNHPQLGKDLIKVLNAMGTGVQLLSKEKCCGVPLIANGFTDKARKQAITNVESIREAVGVKGIPVIATSSTCTFALRDEYPEVLNVDNKGLRDHIELATRWLWRKLDEGKTLPLKPLPLKVVYHTPCHMEKMGWTLYTLELLRNIPGLELTVLDSQCCGIAGTYGFKKENYPTSQAIGAPLFRQIEESGADLVVTDCETCKWQIEMSTSLRCEHPITLLAQALA</sequence>
<proteinExistence type="evidence at protein level"/>
<feature type="chain" id="PRO_0000159259" description="Anaerobic glycerol-3-phosphate dehydrogenase subunit C">
    <location>
        <begin position="1"/>
        <end position="396"/>
    </location>
</feature>
<feature type="domain" description="4Fe-4S ferredoxin-type 1" evidence="2">
    <location>
        <begin position="2"/>
        <end position="29"/>
    </location>
</feature>
<feature type="domain" description="4Fe-4S ferredoxin-type 2" evidence="2">
    <location>
        <begin position="45"/>
        <end position="76"/>
    </location>
</feature>
<feature type="binding site" evidence="1">
    <location>
        <position position="9"/>
    </location>
    <ligand>
        <name>[4Fe-4S] cluster</name>
        <dbReference type="ChEBI" id="CHEBI:49883"/>
        <label>1</label>
    </ligand>
</feature>
<feature type="binding site" evidence="1">
    <location>
        <position position="12"/>
    </location>
    <ligand>
        <name>[4Fe-4S] cluster</name>
        <dbReference type="ChEBI" id="CHEBI:49883"/>
        <label>1</label>
    </ligand>
</feature>
<feature type="binding site" evidence="1">
    <location>
        <position position="15"/>
    </location>
    <ligand>
        <name>[4Fe-4S] cluster</name>
        <dbReference type="ChEBI" id="CHEBI:49883"/>
        <label>1</label>
    </ligand>
</feature>
<feature type="binding site" evidence="1">
    <location>
        <position position="19"/>
    </location>
    <ligand>
        <name>[4Fe-4S] cluster</name>
        <dbReference type="ChEBI" id="CHEBI:49883"/>
        <label>2</label>
    </ligand>
</feature>
<feature type="binding site" evidence="1">
    <location>
        <position position="56"/>
    </location>
    <ligand>
        <name>[4Fe-4S] cluster</name>
        <dbReference type="ChEBI" id="CHEBI:49883"/>
        <label>2</label>
    </ligand>
</feature>
<feature type="binding site" evidence="1">
    <location>
        <position position="59"/>
    </location>
    <ligand>
        <name>[4Fe-4S] cluster</name>
        <dbReference type="ChEBI" id="CHEBI:49883"/>
        <label>2</label>
    </ligand>
</feature>
<feature type="binding site" evidence="1">
    <location>
        <position position="62"/>
    </location>
    <ligand>
        <name>[4Fe-4S] cluster</name>
        <dbReference type="ChEBI" id="CHEBI:49883"/>
        <label>2</label>
    </ligand>
</feature>
<feature type="binding site" evidence="1">
    <location>
        <position position="66"/>
    </location>
    <ligand>
        <name>[4Fe-4S] cluster</name>
        <dbReference type="ChEBI" id="CHEBI:49883"/>
        <label>1</label>
    </ligand>
</feature>
<feature type="sequence conflict" description="In Ref. 1; AAA83866." evidence="3" ref="1">
    <original>C</original>
    <variation>V</variation>
    <location>
        <position position="169"/>
    </location>
</feature>
<feature type="sequence conflict" description="In Ref. 1; AAA83866." evidence="3" ref="1">
    <original>L</original>
    <variation>V</variation>
    <location>
        <position position="206"/>
    </location>
</feature>
<comment type="function">
    <text>Electron transfer protein; may also function as the membrane anchor for the GlpAB dimer.</text>
</comment>
<comment type="pathway">
    <text>Polyol metabolism; glycerol degradation via glycerol kinase pathway; glycerone phosphate from sn-glycerol 3-phosphate (anaerobic route): step 1/1.</text>
</comment>
<comment type="subunit">
    <text>Composed of a catalytic GlpA/B dimer and of GlpC.</text>
</comment>
<comment type="subcellular location">
    <subcellularLocation>
        <location>Cell inner membrane</location>
        <topology>Peripheral membrane protein</topology>
    </subcellularLocation>
    <text>Loosely bound to the cytoplasmic membrane often occurring in vesicles associated with fumarate reductase.</text>
</comment>
<gene>
    <name type="primary">glpC</name>
    <name type="ordered locus">b2243</name>
    <name type="ordered locus">JW2237</name>
</gene>
<protein>
    <recommendedName>
        <fullName>Anaerobic glycerol-3-phosphate dehydrogenase subunit C</fullName>
        <shortName>G-3-P dehydrogenase</shortName>
    </recommendedName>
</protein>
<evidence type="ECO:0000250" key="1"/>
<evidence type="ECO:0000255" key="2">
    <source>
        <dbReference type="PROSITE-ProRule" id="PRU00711"/>
    </source>
</evidence>
<evidence type="ECO:0000305" key="3"/>
<organism>
    <name type="scientific">Escherichia coli (strain K12)</name>
    <dbReference type="NCBI Taxonomy" id="83333"/>
    <lineage>
        <taxon>Bacteria</taxon>
        <taxon>Pseudomonadati</taxon>
        <taxon>Pseudomonadota</taxon>
        <taxon>Gammaproteobacteria</taxon>
        <taxon>Enterobacterales</taxon>
        <taxon>Enterobacteriaceae</taxon>
        <taxon>Escherichia</taxon>
    </lineage>
</organism>